<comment type="function">
    <text evidence="1">Catalyzes the attachment of valine to tRNA(Val). As ValRS can inadvertently accommodate and process structurally similar amino acids such as threonine, to avoid such errors, it has a 'posttransfer' editing activity that hydrolyzes mischarged Thr-tRNA(Val) in a tRNA-dependent manner.</text>
</comment>
<comment type="catalytic activity">
    <reaction evidence="1">
        <text>tRNA(Val) + L-valine + ATP = L-valyl-tRNA(Val) + AMP + diphosphate</text>
        <dbReference type="Rhea" id="RHEA:10704"/>
        <dbReference type="Rhea" id="RHEA-COMP:9672"/>
        <dbReference type="Rhea" id="RHEA-COMP:9708"/>
        <dbReference type="ChEBI" id="CHEBI:30616"/>
        <dbReference type="ChEBI" id="CHEBI:33019"/>
        <dbReference type="ChEBI" id="CHEBI:57762"/>
        <dbReference type="ChEBI" id="CHEBI:78442"/>
        <dbReference type="ChEBI" id="CHEBI:78537"/>
        <dbReference type="ChEBI" id="CHEBI:456215"/>
        <dbReference type="EC" id="6.1.1.9"/>
    </reaction>
</comment>
<comment type="subunit">
    <text evidence="1">Monomer.</text>
</comment>
<comment type="subcellular location">
    <subcellularLocation>
        <location evidence="1">Cytoplasm</location>
    </subcellularLocation>
</comment>
<comment type="domain">
    <text evidence="1">ValRS has two distinct active sites: one for aminoacylation and one for editing. The misactivated threonine is translocated from the active site to the editing site.</text>
</comment>
<comment type="domain">
    <text evidence="1">The C-terminal coiled-coil domain is crucial for aminoacylation activity.</text>
</comment>
<comment type="similarity">
    <text evidence="1">Belongs to the class-I aminoacyl-tRNA synthetase family. ValS type 1 subfamily.</text>
</comment>
<proteinExistence type="inferred from homology"/>
<dbReference type="EC" id="6.1.1.9" evidence="1"/>
<dbReference type="EMBL" id="BA000017">
    <property type="protein sequence ID" value="BAB57825.1"/>
    <property type="molecule type" value="Genomic_DNA"/>
</dbReference>
<dbReference type="RefSeq" id="WP_000425350.1">
    <property type="nucleotide sequence ID" value="NC_002758.2"/>
</dbReference>
<dbReference type="SMR" id="Q931Q1"/>
<dbReference type="KEGG" id="sav:SAV1663"/>
<dbReference type="HOGENOM" id="CLU_001493_0_2_9"/>
<dbReference type="PhylomeDB" id="Q931Q1"/>
<dbReference type="Proteomes" id="UP000002481">
    <property type="component" value="Chromosome"/>
</dbReference>
<dbReference type="GO" id="GO:0005829">
    <property type="term" value="C:cytosol"/>
    <property type="evidence" value="ECO:0007669"/>
    <property type="project" value="TreeGrafter"/>
</dbReference>
<dbReference type="GO" id="GO:0002161">
    <property type="term" value="F:aminoacyl-tRNA deacylase activity"/>
    <property type="evidence" value="ECO:0007669"/>
    <property type="project" value="InterPro"/>
</dbReference>
<dbReference type="GO" id="GO:0005524">
    <property type="term" value="F:ATP binding"/>
    <property type="evidence" value="ECO:0007669"/>
    <property type="project" value="UniProtKB-UniRule"/>
</dbReference>
<dbReference type="GO" id="GO:0004832">
    <property type="term" value="F:valine-tRNA ligase activity"/>
    <property type="evidence" value="ECO:0007669"/>
    <property type="project" value="UniProtKB-UniRule"/>
</dbReference>
<dbReference type="GO" id="GO:0006438">
    <property type="term" value="P:valyl-tRNA aminoacylation"/>
    <property type="evidence" value="ECO:0007669"/>
    <property type="project" value="UniProtKB-UniRule"/>
</dbReference>
<dbReference type="CDD" id="cd07962">
    <property type="entry name" value="Anticodon_Ia_Val"/>
    <property type="match status" value="1"/>
</dbReference>
<dbReference type="CDD" id="cd00817">
    <property type="entry name" value="ValRS_core"/>
    <property type="match status" value="1"/>
</dbReference>
<dbReference type="FunFam" id="1.10.287.380:FF:000001">
    <property type="entry name" value="Valine--tRNA ligase"/>
    <property type="match status" value="1"/>
</dbReference>
<dbReference type="FunFam" id="1.10.730.10:FF:000014">
    <property type="entry name" value="Valine--tRNA ligase"/>
    <property type="match status" value="1"/>
</dbReference>
<dbReference type="FunFam" id="3.40.50.620:FF:000032">
    <property type="entry name" value="Valine--tRNA ligase"/>
    <property type="match status" value="1"/>
</dbReference>
<dbReference type="FunFam" id="3.40.50.620:FF:000098">
    <property type="entry name" value="Valine--tRNA ligase"/>
    <property type="match status" value="1"/>
</dbReference>
<dbReference type="FunFam" id="3.90.740.10:FF:000005">
    <property type="entry name" value="Valine--tRNA ligase, mitochondrial"/>
    <property type="match status" value="1"/>
</dbReference>
<dbReference type="Gene3D" id="3.40.50.620">
    <property type="entry name" value="HUPs"/>
    <property type="match status" value="2"/>
</dbReference>
<dbReference type="Gene3D" id="1.10.730.10">
    <property type="entry name" value="Isoleucyl-tRNA Synthetase, Domain 1"/>
    <property type="match status" value="1"/>
</dbReference>
<dbReference type="Gene3D" id="1.10.287.380">
    <property type="entry name" value="Valyl-tRNA synthetase, C-terminal domain"/>
    <property type="match status" value="1"/>
</dbReference>
<dbReference type="Gene3D" id="3.90.740.10">
    <property type="entry name" value="Valyl/Leucyl/Isoleucyl-tRNA synthetase, editing domain"/>
    <property type="match status" value="1"/>
</dbReference>
<dbReference type="HAMAP" id="MF_02004">
    <property type="entry name" value="Val_tRNA_synth_type1"/>
    <property type="match status" value="1"/>
</dbReference>
<dbReference type="InterPro" id="IPR001412">
    <property type="entry name" value="aa-tRNA-synth_I_CS"/>
</dbReference>
<dbReference type="InterPro" id="IPR002300">
    <property type="entry name" value="aa-tRNA-synth_Ia"/>
</dbReference>
<dbReference type="InterPro" id="IPR033705">
    <property type="entry name" value="Anticodon_Ia_Val"/>
</dbReference>
<dbReference type="InterPro" id="IPR013155">
    <property type="entry name" value="M/V/L/I-tRNA-synth_anticd-bd"/>
</dbReference>
<dbReference type="InterPro" id="IPR014729">
    <property type="entry name" value="Rossmann-like_a/b/a_fold"/>
</dbReference>
<dbReference type="InterPro" id="IPR010978">
    <property type="entry name" value="tRNA-bd_arm"/>
</dbReference>
<dbReference type="InterPro" id="IPR009080">
    <property type="entry name" value="tRNAsynth_Ia_anticodon-bd"/>
</dbReference>
<dbReference type="InterPro" id="IPR037118">
    <property type="entry name" value="Val-tRNA_synth_C_sf"/>
</dbReference>
<dbReference type="InterPro" id="IPR019499">
    <property type="entry name" value="Val-tRNA_synth_tRNA-bd"/>
</dbReference>
<dbReference type="InterPro" id="IPR009008">
    <property type="entry name" value="Val/Leu/Ile-tRNA-synth_edit"/>
</dbReference>
<dbReference type="InterPro" id="IPR002303">
    <property type="entry name" value="Valyl-tRNA_ligase"/>
</dbReference>
<dbReference type="NCBIfam" id="NF004349">
    <property type="entry name" value="PRK05729.1"/>
    <property type="match status" value="1"/>
</dbReference>
<dbReference type="NCBIfam" id="TIGR00422">
    <property type="entry name" value="valS"/>
    <property type="match status" value="1"/>
</dbReference>
<dbReference type="PANTHER" id="PTHR11946:SF93">
    <property type="entry name" value="VALINE--TRNA LIGASE, CHLOROPLASTIC_MITOCHONDRIAL 2"/>
    <property type="match status" value="1"/>
</dbReference>
<dbReference type="PANTHER" id="PTHR11946">
    <property type="entry name" value="VALYL-TRNA SYNTHETASES"/>
    <property type="match status" value="1"/>
</dbReference>
<dbReference type="Pfam" id="PF08264">
    <property type="entry name" value="Anticodon_1"/>
    <property type="match status" value="1"/>
</dbReference>
<dbReference type="Pfam" id="PF00133">
    <property type="entry name" value="tRNA-synt_1"/>
    <property type="match status" value="1"/>
</dbReference>
<dbReference type="Pfam" id="PF10458">
    <property type="entry name" value="Val_tRNA-synt_C"/>
    <property type="match status" value="1"/>
</dbReference>
<dbReference type="PRINTS" id="PR00986">
    <property type="entry name" value="TRNASYNTHVAL"/>
</dbReference>
<dbReference type="SUPFAM" id="SSF47323">
    <property type="entry name" value="Anticodon-binding domain of a subclass of class I aminoacyl-tRNA synthetases"/>
    <property type="match status" value="1"/>
</dbReference>
<dbReference type="SUPFAM" id="SSF52374">
    <property type="entry name" value="Nucleotidylyl transferase"/>
    <property type="match status" value="1"/>
</dbReference>
<dbReference type="SUPFAM" id="SSF46589">
    <property type="entry name" value="tRNA-binding arm"/>
    <property type="match status" value="1"/>
</dbReference>
<dbReference type="SUPFAM" id="SSF50677">
    <property type="entry name" value="ValRS/IleRS/LeuRS editing domain"/>
    <property type="match status" value="1"/>
</dbReference>
<dbReference type="PROSITE" id="PS00178">
    <property type="entry name" value="AA_TRNA_LIGASE_I"/>
    <property type="match status" value="1"/>
</dbReference>
<organism>
    <name type="scientific">Staphylococcus aureus (strain Mu50 / ATCC 700699)</name>
    <dbReference type="NCBI Taxonomy" id="158878"/>
    <lineage>
        <taxon>Bacteria</taxon>
        <taxon>Bacillati</taxon>
        <taxon>Bacillota</taxon>
        <taxon>Bacilli</taxon>
        <taxon>Bacillales</taxon>
        <taxon>Staphylococcaceae</taxon>
        <taxon>Staphylococcus</taxon>
    </lineage>
</organism>
<reference key="1">
    <citation type="journal article" date="2001" name="Lancet">
        <title>Whole genome sequencing of meticillin-resistant Staphylococcus aureus.</title>
        <authorList>
            <person name="Kuroda M."/>
            <person name="Ohta T."/>
            <person name="Uchiyama I."/>
            <person name="Baba T."/>
            <person name="Yuzawa H."/>
            <person name="Kobayashi I."/>
            <person name="Cui L."/>
            <person name="Oguchi A."/>
            <person name="Aoki K."/>
            <person name="Nagai Y."/>
            <person name="Lian J.-Q."/>
            <person name="Ito T."/>
            <person name="Kanamori M."/>
            <person name="Matsumaru H."/>
            <person name="Maruyama A."/>
            <person name="Murakami H."/>
            <person name="Hosoyama A."/>
            <person name="Mizutani-Ui Y."/>
            <person name="Takahashi N.K."/>
            <person name="Sawano T."/>
            <person name="Inoue R."/>
            <person name="Kaito C."/>
            <person name="Sekimizu K."/>
            <person name="Hirakawa H."/>
            <person name="Kuhara S."/>
            <person name="Goto S."/>
            <person name="Yabuzaki J."/>
            <person name="Kanehisa M."/>
            <person name="Yamashita A."/>
            <person name="Oshima K."/>
            <person name="Furuya K."/>
            <person name="Yoshino C."/>
            <person name="Shiba T."/>
            <person name="Hattori M."/>
            <person name="Ogasawara N."/>
            <person name="Hayashi H."/>
            <person name="Hiramatsu K."/>
        </authorList>
    </citation>
    <scope>NUCLEOTIDE SEQUENCE [LARGE SCALE GENOMIC DNA]</scope>
    <source>
        <strain>Mu50 / ATCC 700699</strain>
    </source>
</reference>
<name>SYV_STAAM</name>
<accession>Q931Q1</accession>
<protein>
    <recommendedName>
        <fullName evidence="1">Valine--tRNA ligase</fullName>
        <ecNumber evidence="1">6.1.1.9</ecNumber>
    </recommendedName>
    <alternativeName>
        <fullName evidence="1">Valyl-tRNA synthetase</fullName>
        <shortName evidence="1">ValRS</shortName>
    </alternativeName>
</protein>
<sequence>MEMKPKYDPREVEAGRYEEWVKNGYFKPSEDKSKETYTIVIPPPNVTGKLHLGHAWDTTLQDIITRMKRMQGYDTLYLPGMDHAGIATQAKVEAKLNEQGITRYDLGREKFLEQAWDWKEEYASFIRAQWAKLGLGLDYSRERFTLDEGLSKAVKKVFVDLYNKGIIYRGERIINWDPKARTALSDIEVIHEDVQGAFYHFKYPYADGEGFIEIATTRPETMLGDTAIVVNPNDERYKDVIGKTVILPIVGRELPILADEYVDIDFGSGAMKVTPAHDPNDFEIGQRHQLENIIVMDENGKMNDKAGKYEGMDRFDCRKQLVKDLKEQDLVIKIEDHFHSVGHSERSGAVVEPYLSTQWFVRMEDLAKRSLDNQKTDDRIDFYPQRFEHTFNQWMENIRDWTISRQLWWGHQIPAWYHKETGEIYVGEEAPTDIENWQQDEDVLDTWFSSALWPFSTLGWPDLESEDFKRYYPTNALVTGYDIIFFWVARMIFQGLEFTDRRPFNDVLLHGLVRAEDGRKMSKSLGNGVDPMDVIDEYGADSLRYFLATGSSPGHDLRYSTEKVESVWNFINKIWNGARFSLMNIGEDFKVEDIDLSGNLSLADKWILTRLNETIATVTDLSDKYEFGEVGRALYNFIWDDFCDWYIEMSKIPMNSNDEEQKQVTRSVLSYTLDNIMRMLHPFMPFVTEKIWQSLPHEGDTIVKASWPEVRESLIFEESKQTMQQLVEIIKSVRQSRVEVNTPLSKEIPILIQAKDKEIETTLSQNKDYLIKFCNPSTLNISTDVEIPEKAMTSVVIAGKVVLPLEGLIDMDKEISRLEKELAKLQSELDRVDKKLSNENFVSKAPEKVINEEKRKKQDYQEKYDGVKARIEQLKA</sequence>
<keyword id="KW-0030">Aminoacyl-tRNA synthetase</keyword>
<keyword id="KW-0067">ATP-binding</keyword>
<keyword id="KW-0175">Coiled coil</keyword>
<keyword id="KW-0963">Cytoplasm</keyword>
<keyword id="KW-0436">Ligase</keyword>
<keyword id="KW-0547">Nucleotide-binding</keyword>
<keyword id="KW-0648">Protein biosynthesis</keyword>
<gene>
    <name evidence="1" type="primary">valS</name>
    <name type="ordered locus">SAV1663</name>
</gene>
<feature type="chain" id="PRO_0000224563" description="Valine--tRNA ligase">
    <location>
        <begin position="1"/>
        <end position="876"/>
    </location>
</feature>
<feature type="coiled-coil region" evidence="1">
    <location>
        <begin position="805"/>
        <end position="876"/>
    </location>
</feature>
<feature type="short sequence motif" description="'HIGH' region">
    <location>
        <begin position="44"/>
        <end position="54"/>
    </location>
</feature>
<feature type="short sequence motif" description="'KMSKS' region">
    <location>
        <begin position="520"/>
        <end position="524"/>
    </location>
</feature>
<feature type="binding site" evidence="1">
    <location>
        <position position="523"/>
    </location>
    <ligand>
        <name>ATP</name>
        <dbReference type="ChEBI" id="CHEBI:30616"/>
    </ligand>
</feature>
<evidence type="ECO:0000255" key="1">
    <source>
        <dbReference type="HAMAP-Rule" id="MF_02004"/>
    </source>
</evidence>